<feature type="chain" id="PRO_1000081547" description="Small ribosomal subunit protein uS10">
    <location>
        <begin position="1"/>
        <end position="102"/>
    </location>
</feature>
<evidence type="ECO:0000255" key="1">
    <source>
        <dbReference type="HAMAP-Rule" id="MF_00508"/>
    </source>
</evidence>
<evidence type="ECO:0000305" key="2"/>
<gene>
    <name evidence="1" type="primary">rpsJ</name>
    <name type="ordered locus">DehaBAV1_0450</name>
</gene>
<accession>A5FRY8</accession>
<name>RS10_DEHMB</name>
<sequence length="102" mass="11467">MAKQKIRIKLKGFDHKILDQSALQIVEALERTGATISGPVPLPTRIQRYSVIRASFIDKDSQEQFEIRTHKRLIDIVETTSKTIDALTNLNLPAGVSIDIKL</sequence>
<proteinExistence type="inferred from homology"/>
<keyword id="KW-0687">Ribonucleoprotein</keyword>
<keyword id="KW-0689">Ribosomal protein</keyword>
<comment type="function">
    <text evidence="1">Involved in the binding of tRNA to the ribosomes.</text>
</comment>
<comment type="subunit">
    <text evidence="1">Part of the 30S ribosomal subunit.</text>
</comment>
<comment type="similarity">
    <text evidence="1">Belongs to the universal ribosomal protein uS10 family.</text>
</comment>
<reference key="1">
    <citation type="submission" date="2007-05" db="EMBL/GenBank/DDBJ databases">
        <title>Complete sequence of Dehalococcoides sp. BAV1.</title>
        <authorList>
            <consortium name="US DOE Joint Genome Institute"/>
            <person name="Copeland A."/>
            <person name="Lucas S."/>
            <person name="Lapidus A."/>
            <person name="Barry K."/>
            <person name="Detter J.C."/>
            <person name="Glavina del Rio T."/>
            <person name="Hammon N."/>
            <person name="Israni S."/>
            <person name="Pitluck S."/>
            <person name="Lowry S."/>
            <person name="Clum A."/>
            <person name="Schmutz J."/>
            <person name="Larimer F."/>
            <person name="Land M."/>
            <person name="Hauser L."/>
            <person name="Kyrpides N."/>
            <person name="Kim E."/>
            <person name="Ritalahti K.M."/>
            <person name="Loeffler F."/>
            <person name="Richardson P."/>
        </authorList>
    </citation>
    <scope>NUCLEOTIDE SEQUENCE [LARGE SCALE GENOMIC DNA]</scope>
    <source>
        <strain>ATCC BAA-2100 / JCM 16839 / KCTC 5957 / BAV1</strain>
    </source>
</reference>
<dbReference type="EMBL" id="CP000688">
    <property type="protein sequence ID" value="ABQ17035.1"/>
    <property type="molecule type" value="Genomic_DNA"/>
</dbReference>
<dbReference type="SMR" id="A5FRY8"/>
<dbReference type="KEGG" id="deb:DehaBAV1_0450"/>
<dbReference type="PATRIC" id="fig|216389.18.peg.493"/>
<dbReference type="HOGENOM" id="CLU_122625_1_3_0"/>
<dbReference type="GO" id="GO:1990904">
    <property type="term" value="C:ribonucleoprotein complex"/>
    <property type="evidence" value="ECO:0007669"/>
    <property type="project" value="UniProtKB-KW"/>
</dbReference>
<dbReference type="GO" id="GO:0005840">
    <property type="term" value="C:ribosome"/>
    <property type="evidence" value="ECO:0007669"/>
    <property type="project" value="UniProtKB-KW"/>
</dbReference>
<dbReference type="GO" id="GO:0003735">
    <property type="term" value="F:structural constituent of ribosome"/>
    <property type="evidence" value="ECO:0007669"/>
    <property type="project" value="InterPro"/>
</dbReference>
<dbReference type="GO" id="GO:0000049">
    <property type="term" value="F:tRNA binding"/>
    <property type="evidence" value="ECO:0007669"/>
    <property type="project" value="UniProtKB-UniRule"/>
</dbReference>
<dbReference type="GO" id="GO:0006412">
    <property type="term" value="P:translation"/>
    <property type="evidence" value="ECO:0007669"/>
    <property type="project" value="UniProtKB-UniRule"/>
</dbReference>
<dbReference type="FunFam" id="3.30.70.600:FF:000003">
    <property type="entry name" value="30S ribosomal protein S10"/>
    <property type="match status" value="1"/>
</dbReference>
<dbReference type="Gene3D" id="3.30.70.600">
    <property type="entry name" value="Ribosomal protein S10 domain"/>
    <property type="match status" value="1"/>
</dbReference>
<dbReference type="HAMAP" id="MF_00508">
    <property type="entry name" value="Ribosomal_uS10"/>
    <property type="match status" value="1"/>
</dbReference>
<dbReference type="InterPro" id="IPR001848">
    <property type="entry name" value="Ribosomal_uS10"/>
</dbReference>
<dbReference type="InterPro" id="IPR027486">
    <property type="entry name" value="Ribosomal_uS10_dom"/>
</dbReference>
<dbReference type="InterPro" id="IPR036838">
    <property type="entry name" value="Ribosomal_uS10_dom_sf"/>
</dbReference>
<dbReference type="NCBIfam" id="NF001861">
    <property type="entry name" value="PRK00596.1"/>
    <property type="match status" value="1"/>
</dbReference>
<dbReference type="NCBIfam" id="TIGR01049">
    <property type="entry name" value="rpsJ_bact"/>
    <property type="match status" value="1"/>
</dbReference>
<dbReference type="PANTHER" id="PTHR11700">
    <property type="entry name" value="30S RIBOSOMAL PROTEIN S10 FAMILY MEMBER"/>
    <property type="match status" value="1"/>
</dbReference>
<dbReference type="Pfam" id="PF00338">
    <property type="entry name" value="Ribosomal_S10"/>
    <property type="match status" value="1"/>
</dbReference>
<dbReference type="PRINTS" id="PR00971">
    <property type="entry name" value="RIBOSOMALS10"/>
</dbReference>
<dbReference type="SMART" id="SM01403">
    <property type="entry name" value="Ribosomal_S10"/>
    <property type="match status" value="1"/>
</dbReference>
<dbReference type="SUPFAM" id="SSF54999">
    <property type="entry name" value="Ribosomal protein S10"/>
    <property type="match status" value="1"/>
</dbReference>
<protein>
    <recommendedName>
        <fullName evidence="1">Small ribosomal subunit protein uS10</fullName>
    </recommendedName>
    <alternativeName>
        <fullName evidence="2">30S ribosomal protein S10</fullName>
    </alternativeName>
</protein>
<organism>
    <name type="scientific">Dehalococcoides mccartyi (strain ATCC BAA-2100 / JCM 16839 / KCTC 5957 / BAV1)</name>
    <dbReference type="NCBI Taxonomy" id="216389"/>
    <lineage>
        <taxon>Bacteria</taxon>
        <taxon>Bacillati</taxon>
        <taxon>Chloroflexota</taxon>
        <taxon>Dehalococcoidia</taxon>
        <taxon>Dehalococcoidales</taxon>
        <taxon>Dehalococcoidaceae</taxon>
        <taxon>Dehalococcoides</taxon>
    </lineage>
</organism>